<comment type="function">
    <text evidence="10 14 15">A DNA helicase/translocase involved in multiple DNA transactions (PubMed:9701819, PubMed:28527403, PubMed:32793628). Probably required for recombinational DNA repair via homologous recombination and for nucleotide excision repair (Probable) (PubMed:28527403). DNA helicase used for plasmid rolling-circle replication and also involved in UV repair (PubMed:9701819). PcrA depletion leads to chromosome segregation defects (PubMed:32793628). Probably promotes forward RNA polymerase (RNAP) translocation; cells depleted of PcrA may die because they cannot resuscitate replisomes blocked by either a RecA-ssDNA complex and/or stalled RNAP complexes (Probable) (PubMed:32793628).</text>
</comment>
<comment type="catalytic activity">
    <reaction evidence="13">
        <text>Couples ATP hydrolysis with the unwinding of duplex DNA by translocating in the 3'-5' direction.</text>
        <dbReference type="EC" id="5.6.2.4"/>
    </reaction>
</comment>
<comment type="catalytic activity">
    <reaction>
        <text>ATP + H2O = ADP + phosphate + H(+)</text>
        <dbReference type="Rhea" id="RHEA:13065"/>
        <dbReference type="ChEBI" id="CHEBI:15377"/>
        <dbReference type="ChEBI" id="CHEBI:15378"/>
        <dbReference type="ChEBI" id="CHEBI:30616"/>
        <dbReference type="ChEBI" id="CHEBI:43474"/>
        <dbReference type="ChEBI" id="CHEBI:456216"/>
        <dbReference type="EC" id="5.6.2.4"/>
    </reaction>
</comment>
<comment type="subunit">
    <text evidence="5 7">Interacts with YxaL; YwhK and YerB (PubMed:12073041). Interacts with the RNA polymerase core (PubMed:21710567).</text>
</comment>
<comment type="subcellular location">
    <subcellularLocation>
        <location evidence="6">Cytoplasm</location>
        <location evidence="6">Nucleoid</location>
    </subcellularLocation>
    <text evidence="6">Localizes over the whole nucleoid (PubMed:21170359).</text>
</comment>
<comment type="disruption phenotype">
    <text evidence="8 9 10">Essential, it cannot be deleted (PubMed:9701819). Leading-strand synthesis of plasmid pT181 was prevented upon PcrA depletion (PubMed:9701819). Cells are 1000-5000 fold less viable in depletion experiments (PubMed:28527403, PubMed:32793628). Depleted cells are more sensitive to DNA damaging agents (PubMed:32793628). Lethality of pcrA depletion was partially suppressed by deleting genes for recA, ssDNA exonuclease recJ, the recO accessory protein or transcription-coupling repair factor mfd; the deletions also proved partial protection against H(2)O(2) but not methyl methansulfonate (PubMed:32793628). The proportion of anucleate or aberrant chromosomes rises in depletion strains, as do filamentous cells; this phenotype is exacerbated in recQ, rarA and recU inactivated strains (PubMed:32793628). The recA deletion-pcrA depletion strain has a very high level of filmentous cells with unsegregated nucleoids (PubMed:32793628).</text>
</comment>
<comment type="similarity">
    <text evidence="12">Belongs to the helicase family. UvrD subfamily.</text>
</comment>
<name>PCRA_BACSU</name>
<protein>
    <recommendedName>
        <fullName>ATP-dependent DNA helicase PcrA</fullName>
        <ecNumber evidence="13">5.6.2.4</ecNumber>
    </recommendedName>
    <alternativeName>
        <fullName evidence="12">DNA 3'-5' helicase PcrA</fullName>
    </alternativeName>
    <alternativeName>
        <fullName evidence="11">PcrA translocase</fullName>
    </alternativeName>
</protein>
<proteinExistence type="evidence at protein level"/>
<sequence length="739" mass="83555">MNYISNQLLSGLNPVQQEAVKTTDGPLLLMAGAGSGKTRVLTHRIAYLMAEKHVAPWNILAITFTNKAAREMKERVESILGPGADDIWISTFHSMCVRILRRDIDRIGINRNFSILDTADQLSVIKGILKERNLDPKKFDPRSILGTISSAKNELTEPEEFSKVAGGYYDQVVSDVYADYQKKLLKNQSLDFDDLIMTTIKLFDRVPEVLEFYQRKFQYIHVDEYQDTNRAQYMLVKQLAERFQNLCVVGDSDQSIYRWRGADITNILSFEKDYPNASVILLEQNYRSTKRILRAANEVIKNNSNRKPKNLWTENDEGIKISYYRGDNEFGEGQFVAGKIHQLHSTGKRKLSDIAILYRTNAQSRVIEETLLKAGLNYNIVGGTKFYDRKEIKDILAYLRLVSNPDDDISFTRIVNVPKRGVGATSLEKIASYAAINGLSFFQAIQQVDFIGVSAKAANALDSFRQMIENLTNMQDYLSITELTEEILDKTEYREMLKAEKSIEAQSRLENIDEFLSVTKNFEQKSEDKTLVAFLTDLALIADIDQLDQKEEESGGKDAITLMTLHAAKGLEFPVVFLMGLEEGVFPHSRSLMEEAEMEEERRLAYVGITRAEQELYLTNAKMRTLFGRTNMNPESRFIAEIPDDLLENLNEKKETRATSARKMQPRRGPVSRPVSYASKTGGDTLNWAVGDKAGHKKWGTGTVVSVKGEGEGTELDIAFPSPVGVKRLLAAFAPIEKQ</sequence>
<reference key="1">
    <citation type="journal article" date="1998" name="Mol. Microbiol.">
        <title>PcrA is an essential DNA helicase of Bacillus subtilis fulfilling functions both in repair and rolling-circle replication.</title>
        <authorList>
            <person name="Petit M.-A."/>
            <person name="Dervyn E."/>
            <person name="Rose M."/>
            <person name="Entian K.-D."/>
            <person name="McGovern S."/>
            <person name="Ehrlich S.D."/>
            <person name="Bruand C."/>
        </authorList>
    </citation>
    <scope>NUCLEOTIDE SEQUENCE [GENOMIC DNA]</scope>
    <scope>FUNCTION</scope>
    <scope>DISRUPTION PHENOTYPE</scope>
    <scope>MUTAGENESIS OF THR-65</scope>
    <source>
        <strain>168</strain>
    </source>
</reference>
<reference key="2">
    <citation type="journal article" date="1997" name="Nature">
        <title>The complete genome sequence of the Gram-positive bacterium Bacillus subtilis.</title>
        <authorList>
            <person name="Kunst F."/>
            <person name="Ogasawara N."/>
            <person name="Moszer I."/>
            <person name="Albertini A.M."/>
            <person name="Alloni G."/>
            <person name="Azevedo V."/>
            <person name="Bertero M.G."/>
            <person name="Bessieres P."/>
            <person name="Bolotin A."/>
            <person name="Borchert S."/>
            <person name="Borriss R."/>
            <person name="Boursier L."/>
            <person name="Brans A."/>
            <person name="Braun M."/>
            <person name="Brignell S.C."/>
            <person name="Bron S."/>
            <person name="Brouillet S."/>
            <person name="Bruschi C.V."/>
            <person name="Caldwell B."/>
            <person name="Capuano V."/>
            <person name="Carter N.M."/>
            <person name="Choi S.-K."/>
            <person name="Codani J.-J."/>
            <person name="Connerton I.F."/>
            <person name="Cummings N.J."/>
            <person name="Daniel R.A."/>
            <person name="Denizot F."/>
            <person name="Devine K.M."/>
            <person name="Duesterhoeft A."/>
            <person name="Ehrlich S.D."/>
            <person name="Emmerson P.T."/>
            <person name="Entian K.-D."/>
            <person name="Errington J."/>
            <person name="Fabret C."/>
            <person name="Ferrari E."/>
            <person name="Foulger D."/>
            <person name="Fritz C."/>
            <person name="Fujita M."/>
            <person name="Fujita Y."/>
            <person name="Fuma S."/>
            <person name="Galizzi A."/>
            <person name="Galleron N."/>
            <person name="Ghim S.-Y."/>
            <person name="Glaser P."/>
            <person name="Goffeau A."/>
            <person name="Golightly E.J."/>
            <person name="Grandi G."/>
            <person name="Guiseppi G."/>
            <person name="Guy B.J."/>
            <person name="Haga K."/>
            <person name="Haiech J."/>
            <person name="Harwood C.R."/>
            <person name="Henaut A."/>
            <person name="Hilbert H."/>
            <person name="Holsappel S."/>
            <person name="Hosono S."/>
            <person name="Hullo M.-F."/>
            <person name="Itaya M."/>
            <person name="Jones L.-M."/>
            <person name="Joris B."/>
            <person name="Karamata D."/>
            <person name="Kasahara Y."/>
            <person name="Klaerr-Blanchard M."/>
            <person name="Klein C."/>
            <person name="Kobayashi Y."/>
            <person name="Koetter P."/>
            <person name="Koningstein G."/>
            <person name="Krogh S."/>
            <person name="Kumano M."/>
            <person name="Kurita K."/>
            <person name="Lapidus A."/>
            <person name="Lardinois S."/>
            <person name="Lauber J."/>
            <person name="Lazarevic V."/>
            <person name="Lee S.-M."/>
            <person name="Levine A."/>
            <person name="Liu H."/>
            <person name="Masuda S."/>
            <person name="Mauel C."/>
            <person name="Medigue C."/>
            <person name="Medina N."/>
            <person name="Mellado R.P."/>
            <person name="Mizuno M."/>
            <person name="Moestl D."/>
            <person name="Nakai S."/>
            <person name="Noback M."/>
            <person name="Noone D."/>
            <person name="O'Reilly M."/>
            <person name="Ogawa K."/>
            <person name="Ogiwara A."/>
            <person name="Oudega B."/>
            <person name="Park S.-H."/>
            <person name="Parro V."/>
            <person name="Pohl T.M."/>
            <person name="Portetelle D."/>
            <person name="Porwollik S."/>
            <person name="Prescott A.M."/>
            <person name="Presecan E."/>
            <person name="Pujic P."/>
            <person name="Purnelle B."/>
            <person name="Rapoport G."/>
            <person name="Rey M."/>
            <person name="Reynolds S."/>
            <person name="Rieger M."/>
            <person name="Rivolta C."/>
            <person name="Rocha E."/>
            <person name="Roche B."/>
            <person name="Rose M."/>
            <person name="Sadaie Y."/>
            <person name="Sato T."/>
            <person name="Scanlan E."/>
            <person name="Schleich S."/>
            <person name="Schroeter R."/>
            <person name="Scoffone F."/>
            <person name="Sekiguchi J."/>
            <person name="Sekowska A."/>
            <person name="Seror S.J."/>
            <person name="Serror P."/>
            <person name="Shin B.-S."/>
            <person name="Soldo B."/>
            <person name="Sorokin A."/>
            <person name="Tacconi E."/>
            <person name="Takagi T."/>
            <person name="Takahashi H."/>
            <person name="Takemaru K."/>
            <person name="Takeuchi M."/>
            <person name="Tamakoshi A."/>
            <person name="Tanaka T."/>
            <person name="Terpstra P."/>
            <person name="Tognoni A."/>
            <person name="Tosato V."/>
            <person name="Uchiyama S."/>
            <person name="Vandenbol M."/>
            <person name="Vannier F."/>
            <person name="Vassarotti A."/>
            <person name="Viari A."/>
            <person name="Wambutt R."/>
            <person name="Wedler E."/>
            <person name="Wedler H."/>
            <person name="Weitzenegger T."/>
            <person name="Winters P."/>
            <person name="Wipat A."/>
            <person name="Yamamoto H."/>
            <person name="Yamane K."/>
            <person name="Yasumoto K."/>
            <person name="Yata K."/>
            <person name="Yoshida K."/>
            <person name="Yoshikawa H.-F."/>
            <person name="Zumstein E."/>
            <person name="Yoshikawa H."/>
            <person name="Danchin A."/>
        </authorList>
    </citation>
    <scope>NUCLEOTIDE SEQUENCE [LARGE SCALE GENOMIC DNA]</scope>
    <source>
        <strain>168</strain>
    </source>
</reference>
<reference key="3">
    <citation type="journal article" date="2002" name="Mol. Genet. Genomics">
        <title>The beta-propeller protein YxaL increases the processivity of the PcrA helicase.</title>
        <authorList>
            <person name="Noirot-Gros M.-F."/>
            <person name="Soultanas P."/>
            <person name="Wigley D.B."/>
            <person name="Ehrlich S.D."/>
            <person name="Noirot P."/>
            <person name="Petit M.-A."/>
        </authorList>
    </citation>
    <scope>FUNCTION AS A HELICASE</scope>
    <scope>INTERACTION WITH YXAL; YWHK AND YERB</scope>
</reference>
<reference key="4">
    <citation type="journal article" date="2010" name="PLoS Genet.">
        <title>The C-terminal domain of the bacterial SSB protein acts as a DNA maintenance hub at active chromosome replication forks.</title>
        <authorList>
            <person name="Costes A."/>
            <person name="Lecointe F."/>
            <person name="McGovern S."/>
            <person name="Quevillon-Cheruel S."/>
            <person name="Polard P."/>
        </authorList>
    </citation>
    <scope>SUBCELLULAR LOCATION</scope>
    <source>
        <strain>168</strain>
    </source>
</reference>
<reference key="5">
    <citation type="journal article" date="2011" name="Proteomics">
        <title>The dynamic protein partnership of RNA polymerase in Bacillus subtilis.</title>
        <authorList>
            <person name="Delumeau O."/>
            <person name="Lecointe F."/>
            <person name="Muntel J."/>
            <person name="Guillot A."/>
            <person name="Guedon E."/>
            <person name="Monnet V."/>
            <person name="Hecker M."/>
            <person name="Becher D."/>
            <person name="Polard P."/>
            <person name="Noirot P."/>
        </authorList>
    </citation>
    <scope>SUBUNIT</scope>
    <source>
        <strain>168</strain>
    </source>
</reference>
<reference key="6">
    <citation type="journal article" date="2017" name="DNA Repair">
        <title>Interplay between Bacillus subtilis RecD2 and the RecG or RuvAB helicase in recombinational repair.</title>
        <authorList>
            <person name="Torres R."/>
            <person name="Romero H."/>
            <person name="Rodriguez-Cerrato V."/>
            <person name="Alonso J.C."/>
        </authorList>
    </citation>
    <scope>FUNCTION</scope>
    <scope>DISRUPTION PHENOTYPE</scope>
    <scope>MUTAGENESIS OF ALA-596</scope>
    <source>
        <strain>168 / YB886 / BG214</strain>
    </source>
</reference>
<reference key="7">
    <citation type="journal article" date="2020" name="Front. Mol. Biosci.">
        <title>Bacillus subtilis PcrA Couples DNA Replication, Transcription, Recombination and Segregation.</title>
        <authorList>
            <person name="Moreno-Del Alamo M."/>
            <person name="Torres R."/>
            <person name="Manfredi C."/>
            <person name="Ruiz-Maso J.A."/>
            <person name="Del Solar G."/>
            <person name="Alonso J.C."/>
        </authorList>
    </citation>
    <scope>FUNCTION</scope>
    <scope>DISRUPTION PHENOTYPE</scope>
    <scope>MUTAGENESIS OF LYS-37</scope>
    <source>
        <strain>168 / YB886 / BG214</strain>
    </source>
</reference>
<feature type="chain" id="PRO_0000102051" description="ATP-dependent DNA helicase PcrA">
    <location>
        <begin position="1"/>
        <end position="739"/>
    </location>
</feature>
<feature type="domain" description="UvrD-like helicase ATP-binding" evidence="2">
    <location>
        <begin position="10"/>
        <end position="289"/>
    </location>
</feature>
<feature type="domain" description="UvrD-like helicase C-terminal" evidence="3">
    <location>
        <begin position="290"/>
        <end position="570"/>
    </location>
</feature>
<feature type="region of interest" description="Disordered" evidence="4">
    <location>
        <begin position="655"/>
        <end position="678"/>
    </location>
</feature>
<feature type="binding site" evidence="2">
    <location>
        <begin position="34"/>
        <end position="39"/>
    </location>
    <ligand>
        <name>ATP</name>
        <dbReference type="ChEBI" id="CHEBI:30616"/>
    </ligand>
</feature>
<feature type="binding site" evidence="1">
    <location>
        <position position="287"/>
    </location>
    <ligand>
        <name>ATP</name>
        <dbReference type="ChEBI" id="CHEBI:30616"/>
    </ligand>
</feature>
<feature type="mutagenesis site" description="Cells are inviable, cannot be generated." evidence="9">
    <original>K</original>
    <variation>A</variation>
    <location>
        <position position="37"/>
    </location>
</feature>
<feature type="mutagenesis site" description="Inhibits rolling-circle replication of plasmid pT181 derivatives." evidence="10">
    <original>T</original>
    <variation>I</variation>
    <location>
        <position position="65"/>
    </location>
</feature>
<feature type="mutagenesis site" description="Suppresses a recD2 and recD2-addAB deletion, increased sensitivity to DNA damaging agents, more severe in double mutants." evidence="8">
    <original>A</original>
    <variation>V</variation>
    <location>
        <position position="596"/>
    </location>
</feature>
<accession>O34580</accession>
<gene>
    <name type="primary">pcrA</name>
    <name type="synonym">yerF</name>
    <name type="ordered locus">BSU06610</name>
</gene>
<keyword id="KW-0067">ATP-binding</keyword>
<keyword id="KW-0963">Cytoplasm</keyword>
<keyword id="KW-0227">DNA damage</keyword>
<keyword id="KW-0234">DNA repair</keyword>
<keyword id="KW-0238">DNA-binding</keyword>
<keyword id="KW-0347">Helicase</keyword>
<keyword id="KW-0378">Hydrolase</keyword>
<keyword id="KW-0413">Isomerase</keyword>
<keyword id="KW-0547">Nucleotide-binding</keyword>
<keyword id="KW-1185">Reference proteome</keyword>
<evidence type="ECO:0000250" key="1"/>
<evidence type="ECO:0000255" key="2">
    <source>
        <dbReference type="PROSITE-ProRule" id="PRU00560"/>
    </source>
</evidence>
<evidence type="ECO:0000255" key="3">
    <source>
        <dbReference type="PROSITE-ProRule" id="PRU00617"/>
    </source>
</evidence>
<evidence type="ECO:0000256" key="4">
    <source>
        <dbReference type="SAM" id="MobiDB-lite"/>
    </source>
</evidence>
<evidence type="ECO:0000269" key="5">
    <source>
    </source>
</evidence>
<evidence type="ECO:0000269" key="6">
    <source>
    </source>
</evidence>
<evidence type="ECO:0000269" key="7">
    <source>
    </source>
</evidence>
<evidence type="ECO:0000269" key="8">
    <source>
    </source>
</evidence>
<evidence type="ECO:0000269" key="9">
    <source>
    </source>
</evidence>
<evidence type="ECO:0000269" key="10">
    <source>
    </source>
</evidence>
<evidence type="ECO:0000303" key="11">
    <source>
    </source>
</evidence>
<evidence type="ECO:0000305" key="12"/>
<evidence type="ECO:0000305" key="13">
    <source>
    </source>
</evidence>
<evidence type="ECO:0000305" key="14">
    <source>
    </source>
</evidence>
<evidence type="ECO:0000305" key="15">
    <source>
    </source>
</evidence>
<organism>
    <name type="scientific">Bacillus subtilis (strain 168)</name>
    <dbReference type="NCBI Taxonomy" id="224308"/>
    <lineage>
        <taxon>Bacteria</taxon>
        <taxon>Bacillati</taxon>
        <taxon>Bacillota</taxon>
        <taxon>Bacilli</taxon>
        <taxon>Bacillales</taxon>
        <taxon>Bacillaceae</taxon>
        <taxon>Bacillus</taxon>
    </lineage>
</organism>
<dbReference type="EC" id="5.6.2.4" evidence="13"/>
<dbReference type="EMBL" id="Y15254">
    <property type="protein sequence ID" value="CAA75552.1"/>
    <property type="molecule type" value="Genomic_DNA"/>
</dbReference>
<dbReference type="EMBL" id="AL009126">
    <property type="protein sequence ID" value="CAB12481.1"/>
    <property type="molecule type" value="Genomic_DNA"/>
</dbReference>
<dbReference type="PIR" id="E69794">
    <property type="entry name" value="E69794"/>
</dbReference>
<dbReference type="RefSeq" id="NP_388543.1">
    <property type="nucleotide sequence ID" value="NC_000964.3"/>
</dbReference>
<dbReference type="RefSeq" id="WP_003233919.1">
    <property type="nucleotide sequence ID" value="NZ_OZ025638.1"/>
</dbReference>
<dbReference type="SMR" id="O34580"/>
<dbReference type="FunCoup" id="O34580">
    <property type="interactions" value="765"/>
</dbReference>
<dbReference type="IntAct" id="O34580">
    <property type="interactions" value="5"/>
</dbReference>
<dbReference type="STRING" id="224308.BSU06610"/>
<dbReference type="PaxDb" id="224308-BSU06610"/>
<dbReference type="EnsemblBacteria" id="CAB12481">
    <property type="protein sequence ID" value="CAB12481"/>
    <property type="gene ID" value="BSU_06610"/>
</dbReference>
<dbReference type="GeneID" id="938747"/>
<dbReference type="KEGG" id="bsu:BSU06610"/>
<dbReference type="PATRIC" id="fig|224308.179.peg.719"/>
<dbReference type="eggNOG" id="COG0210">
    <property type="taxonomic scope" value="Bacteria"/>
</dbReference>
<dbReference type="InParanoid" id="O34580"/>
<dbReference type="OrthoDB" id="9810135at2"/>
<dbReference type="PhylomeDB" id="O34580"/>
<dbReference type="BioCyc" id="BSUB:BSU06610-MONOMER"/>
<dbReference type="Proteomes" id="UP000001570">
    <property type="component" value="Chromosome"/>
</dbReference>
<dbReference type="GO" id="GO:0005829">
    <property type="term" value="C:cytosol"/>
    <property type="evidence" value="ECO:0000318"/>
    <property type="project" value="GO_Central"/>
</dbReference>
<dbReference type="GO" id="GO:0033202">
    <property type="term" value="C:DNA helicase complex"/>
    <property type="evidence" value="ECO:0000318"/>
    <property type="project" value="GO_Central"/>
</dbReference>
<dbReference type="GO" id="GO:0009295">
    <property type="term" value="C:nucleoid"/>
    <property type="evidence" value="ECO:0007669"/>
    <property type="project" value="UniProtKB-SubCell"/>
</dbReference>
<dbReference type="GO" id="GO:0043138">
    <property type="term" value="F:3'-5' DNA helicase activity"/>
    <property type="evidence" value="ECO:0000318"/>
    <property type="project" value="GO_Central"/>
</dbReference>
<dbReference type="GO" id="GO:0005524">
    <property type="term" value="F:ATP binding"/>
    <property type="evidence" value="ECO:0007669"/>
    <property type="project" value="UniProtKB-KW"/>
</dbReference>
<dbReference type="GO" id="GO:0016887">
    <property type="term" value="F:ATP hydrolysis activity"/>
    <property type="evidence" value="ECO:0007669"/>
    <property type="project" value="RHEA"/>
</dbReference>
<dbReference type="GO" id="GO:0003677">
    <property type="term" value="F:DNA binding"/>
    <property type="evidence" value="ECO:0007669"/>
    <property type="project" value="UniProtKB-KW"/>
</dbReference>
<dbReference type="GO" id="GO:0006260">
    <property type="term" value="P:DNA replication"/>
    <property type="evidence" value="ECO:0007669"/>
    <property type="project" value="InterPro"/>
</dbReference>
<dbReference type="GO" id="GO:0000725">
    <property type="term" value="P:recombinational repair"/>
    <property type="evidence" value="ECO:0000318"/>
    <property type="project" value="GO_Central"/>
</dbReference>
<dbReference type="CDD" id="cd17932">
    <property type="entry name" value="DEXQc_UvrD"/>
    <property type="match status" value="1"/>
</dbReference>
<dbReference type="CDD" id="cd18807">
    <property type="entry name" value="SF1_C_UvrD"/>
    <property type="match status" value="1"/>
</dbReference>
<dbReference type="FunFam" id="1.10.10.160:FF:000001">
    <property type="entry name" value="ATP-dependent DNA helicase"/>
    <property type="match status" value="1"/>
</dbReference>
<dbReference type="FunFam" id="1.10.486.10:FF:000003">
    <property type="entry name" value="ATP-dependent DNA helicase"/>
    <property type="match status" value="1"/>
</dbReference>
<dbReference type="Gene3D" id="1.10.10.160">
    <property type="match status" value="1"/>
</dbReference>
<dbReference type="Gene3D" id="3.40.50.300">
    <property type="entry name" value="P-loop containing nucleotide triphosphate hydrolases"/>
    <property type="match status" value="2"/>
</dbReference>
<dbReference type="Gene3D" id="1.10.486.10">
    <property type="entry name" value="PCRA, domain 4"/>
    <property type="match status" value="1"/>
</dbReference>
<dbReference type="InterPro" id="IPR005751">
    <property type="entry name" value="ATP-dep_DNA_helicase_PcrA"/>
</dbReference>
<dbReference type="InterPro" id="IPR013986">
    <property type="entry name" value="DExx_box_DNA_helicase_dom_sf"/>
</dbReference>
<dbReference type="InterPro" id="IPR014017">
    <property type="entry name" value="DNA_helicase_UvrD-like_C"/>
</dbReference>
<dbReference type="InterPro" id="IPR000212">
    <property type="entry name" value="DNA_helicase_UvrD/REP"/>
</dbReference>
<dbReference type="InterPro" id="IPR027417">
    <property type="entry name" value="P-loop_NTPase"/>
</dbReference>
<dbReference type="InterPro" id="IPR014016">
    <property type="entry name" value="UvrD-like_ATP-bd"/>
</dbReference>
<dbReference type="NCBIfam" id="TIGR01073">
    <property type="entry name" value="pcrA"/>
    <property type="match status" value="1"/>
</dbReference>
<dbReference type="PANTHER" id="PTHR11070:SF2">
    <property type="entry name" value="ATP-DEPENDENT DNA HELICASE SRS2"/>
    <property type="match status" value="1"/>
</dbReference>
<dbReference type="PANTHER" id="PTHR11070">
    <property type="entry name" value="UVRD / RECB / PCRA DNA HELICASE FAMILY MEMBER"/>
    <property type="match status" value="1"/>
</dbReference>
<dbReference type="Pfam" id="PF21196">
    <property type="entry name" value="PcrA_UvrD_tudor"/>
    <property type="match status" value="1"/>
</dbReference>
<dbReference type="Pfam" id="PF00580">
    <property type="entry name" value="UvrD-helicase"/>
    <property type="match status" value="1"/>
</dbReference>
<dbReference type="Pfam" id="PF13361">
    <property type="entry name" value="UvrD_C"/>
    <property type="match status" value="1"/>
</dbReference>
<dbReference type="SUPFAM" id="SSF52540">
    <property type="entry name" value="P-loop containing nucleoside triphosphate hydrolases"/>
    <property type="match status" value="1"/>
</dbReference>
<dbReference type="PROSITE" id="PS51198">
    <property type="entry name" value="UVRD_HELICASE_ATP_BIND"/>
    <property type="match status" value="1"/>
</dbReference>
<dbReference type="PROSITE" id="PS51217">
    <property type="entry name" value="UVRD_HELICASE_CTER"/>
    <property type="match status" value="1"/>
</dbReference>